<comment type="function">
    <text evidence="1">Produces ATP from ADP in the presence of a proton gradient across the membrane.</text>
</comment>
<comment type="subunit">
    <text evidence="1">F-type ATPases have 2 components, CF(1) - the catalytic core - and CF(0) - the membrane proton channel. CF(1) has five subunits: alpha(3), beta(3), gamma(1), delta(1), epsilon(1). CF(0) has three main subunits: a, b and c.</text>
</comment>
<comment type="subcellular location">
    <subcellularLocation>
        <location evidence="1">Plastid</location>
        <location evidence="1">Chloroplast thylakoid membrane</location>
        <topology evidence="1">Peripheral membrane protein</topology>
    </subcellularLocation>
</comment>
<comment type="similarity">
    <text evidence="1">Belongs to the ATPase epsilon chain family.</text>
</comment>
<protein>
    <recommendedName>
        <fullName evidence="1">ATP synthase epsilon chain, chloroplastic</fullName>
    </recommendedName>
    <alternativeName>
        <fullName evidence="1">ATP synthase F1 sector epsilon subunit</fullName>
    </alternativeName>
    <alternativeName>
        <fullName evidence="1">F-ATPase epsilon subunit</fullName>
    </alternativeName>
</protein>
<sequence>MALNIRVMAPNRIVWNSEAQEIILSTNSGQIGILPNHAPLLTALDIGIMRILVNGQWTSMALMGGFALVDNNQLTILVNEAEKASEIDPKEAENNFELAKQNLAAAEGRKQIIEANLSFQRAKARLDAVNASSRLG</sequence>
<name>ATPE_CHAGL</name>
<reference key="1">
    <citation type="journal article" date="2002" name="Proc. Natl. Acad. Sci. U.S.A.">
        <title>The chloroplast and mitochondrial genome sequences of the charophyte Chaetosphaeridium globosum: insights into the timing of the events that restructured organelle DNAs within the green algal lineage that led to land plants.</title>
        <authorList>
            <person name="Turmel M."/>
            <person name="Otis C."/>
            <person name="Lemieux C."/>
        </authorList>
    </citation>
    <scope>NUCLEOTIDE SEQUENCE [LARGE SCALE GENOMIC DNA]</scope>
    <source>
        <strain>M1311</strain>
    </source>
</reference>
<feature type="chain" id="PRO_0000188257" description="ATP synthase epsilon chain, chloroplastic">
    <location>
        <begin position="1"/>
        <end position="136"/>
    </location>
</feature>
<evidence type="ECO:0000255" key="1">
    <source>
        <dbReference type="HAMAP-Rule" id="MF_00530"/>
    </source>
</evidence>
<keyword id="KW-0066">ATP synthesis</keyword>
<keyword id="KW-0139">CF(1)</keyword>
<keyword id="KW-0150">Chloroplast</keyword>
<keyword id="KW-0375">Hydrogen ion transport</keyword>
<keyword id="KW-0406">Ion transport</keyword>
<keyword id="KW-0472">Membrane</keyword>
<keyword id="KW-0934">Plastid</keyword>
<keyword id="KW-0793">Thylakoid</keyword>
<keyword id="KW-0813">Transport</keyword>
<dbReference type="EMBL" id="AF494278">
    <property type="protein sequence ID" value="AAM96501.1"/>
    <property type="molecule type" value="Genomic_DNA"/>
</dbReference>
<dbReference type="RefSeq" id="NP_683809.1">
    <property type="nucleotide sequence ID" value="NC_004115.1"/>
</dbReference>
<dbReference type="SMR" id="Q8M9X7"/>
<dbReference type="GeneID" id="860670"/>
<dbReference type="GO" id="GO:0009535">
    <property type="term" value="C:chloroplast thylakoid membrane"/>
    <property type="evidence" value="ECO:0007669"/>
    <property type="project" value="UniProtKB-SubCell"/>
</dbReference>
<dbReference type="GO" id="GO:0045259">
    <property type="term" value="C:proton-transporting ATP synthase complex"/>
    <property type="evidence" value="ECO:0007669"/>
    <property type="project" value="UniProtKB-KW"/>
</dbReference>
<dbReference type="GO" id="GO:0005524">
    <property type="term" value="F:ATP binding"/>
    <property type="evidence" value="ECO:0007669"/>
    <property type="project" value="UniProtKB-UniRule"/>
</dbReference>
<dbReference type="GO" id="GO:0046933">
    <property type="term" value="F:proton-transporting ATP synthase activity, rotational mechanism"/>
    <property type="evidence" value="ECO:0007669"/>
    <property type="project" value="UniProtKB-UniRule"/>
</dbReference>
<dbReference type="CDD" id="cd12152">
    <property type="entry name" value="F1-ATPase_delta"/>
    <property type="match status" value="1"/>
</dbReference>
<dbReference type="FunFam" id="2.60.15.10:FF:000002">
    <property type="entry name" value="ATP synthase epsilon chain, chloroplastic"/>
    <property type="match status" value="1"/>
</dbReference>
<dbReference type="Gene3D" id="6.10.140.480">
    <property type="match status" value="1"/>
</dbReference>
<dbReference type="Gene3D" id="2.60.15.10">
    <property type="entry name" value="F0F1 ATP synthase delta/epsilon subunit, N-terminal"/>
    <property type="match status" value="1"/>
</dbReference>
<dbReference type="HAMAP" id="MF_00530">
    <property type="entry name" value="ATP_synth_epsil_bac"/>
    <property type="match status" value="1"/>
</dbReference>
<dbReference type="InterPro" id="IPR001469">
    <property type="entry name" value="ATP_synth_F1_dsu/esu"/>
</dbReference>
<dbReference type="InterPro" id="IPR020546">
    <property type="entry name" value="ATP_synth_F1_dsu/esu_N"/>
</dbReference>
<dbReference type="InterPro" id="IPR020547">
    <property type="entry name" value="ATP_synth_F1_esu_C"/>
</dbReference>
<dbReference type="InterPro" id="IPR036771">
    <property type="entry name" value="ATPsynth_dsu/esu_N"/>
</dbReference>
<dbReference type="NCBIfam" id="TIGR01216">
    <property type="entry name" value="ATP_synt_epsi"/>
    <property type="match status" value="1"/>
</dbReference>
<dbReference type="PANTHER" id="PTHR13822">
    <property type="entry name" value="ATP SYNTHASE DELTA/EPSILON CHAIN"/>
    <property type="match status" value="1"/>
</dbReference>
<dbReference type="PANTHER" id="PTHR13822:SF10">
    <property type="entry name" value="ATP SYNTHASE EPSILON CHAIN, CHLOROPLASTIC"/>
    <property type="match status" value="1"/>
</dbReference>
<dbReference type="Pfam" id="PF00401">
    <property type="entry name" value="ATP-synt_DE"/>
    <property type="match status" value="1"/>
</dbReference>
<dbReference type="Pfam" id="PF02823">
    <property type="entry name" value="ATP-synt_DE_N"/>
    <property type="match status" value="1"/>
</dbReference>
<dbReference type="SUPFAM" id="SSF51344">
    <property type="entry name" value="Epsilon subunit of F1F0-ATP synthase N-terminal domain"/>
    <property type="match status" value="1"/>
</dbReference>
<organism>
    <name type="scientific">Chaetosphaeridium globosum</name>
    <name type="common">Charophycean green alga</name>
    <name type="synonym">Herposteiron globosum</name>
    <dbReference type="NCBI Taxonomy" id="96477"/>
    <lineage>
        <taxon>Eukaryota</taxon>
        <taxon>Viridiplantae</taxon>
        <taxon>Streptophyta</taxon>
        <taxon>Coleochaetophyceae</taxon>
        <taxon>Coleochaetales</taxon>
        <taxon>Chaetosphaeridiaceae</taxon>
        <taxon>Chaetosphaeridium</taxon>
    </lineage>
</organism>
<accession>Q8M9X7</accession>
<geneLocation type="chloroplast"/>
<proteinExistence type="inferred from homology"/>
<gene>
    <name evidence="1" type="primary">atpE</name>
</gene>